<name>TRMFO_DICT6</name>
<sequence length="439" mass="49743">MEKVKIIGGGLAGSEAAWQLAKRKIPVEIYEMRPVVTTPVHKTEYLAELVCSNSFKSTELTNASGLLKEEMKKLDSLLLRVAEETRVPAGVALAVDRELFAKRVQEILLESPYVTVIREEVKKIPEEGIVIVATGPLTSSDFAEHLIEILDTDSLYFYDAVSPIIYADSINYEKVFSASRYGKGEEAYLNCPMTKEEYERFVEELVNAETVESHYPGEEKFFEGCLPIEVLARRGIDTLRYGPMKPVGLIDPKTGKEPYAVVQLRPENIQKTLYSMVGFQTRLKFQEQRRIFRMIPGLENAEFARYGVMHRNTYFYAPKFLKPTLQFIKNERVFFAGQLIGVEGYMESAAMGIVAGINAARLYKGKPLIILPPTTMIGALISYVTTKVPVKQFQPMNANWGILLPLERPVKDKKLRNRLLAERALRDLDDVIRRFAINV</sequence>
<comment type="function">
    <text evidence="1">Catalyzes the folate-dependent formation of 5-methyl-uridine at position 54 (M-5-U54) in all tRNAs.</text>
</comment>
<comment type="catalytic activity">
    <reaction evidence="1">
        <text>uridine(54) in tRNA + (6R)-5,10-methylene-5,6,7,8-tetrahydrofolate + NADH + H(+) = 5-methyluridine(54) in tRNA + (6S)-5,6,7,8-tetrahydrofolate + NAD(+)</text>
        <dbReference type="Rhea" id="RHEA:16873"/>
        <dbReference type="Rhea" id="RHEA-COMP:10167"/>
        <dbReference type="Rhea" id="RHEA-COMP:10193"/>
        <dbReference type="ChEBI" id="CHEBI:15378"/>
        <dbReference type="ChEBI" id="CHEBI:15636"/>
        <dbReference type="ChEBI" id="CHEBI:57453"/>
        <dbReference type="ChEBI" id="CHEBI:57540"/>
        <dbReference type="ChEBI" id="CHEBI:57945"/>
        <dbReference type="ChEBI" id="CHEBI:65315"/>
        <dbReference type="ChEBI" id="CHEBI:74447"/>
        <dbReference type="EC" id="2.1.1.74"/>
    </reaction>
</comment>
<comment type="catalytic activity">
    <reaction evidence="1">
        <text>uridine(54) in tRNA + (6R)-5,10-methylene-5,6,7,8-tetrahydrofolate + NADPH + H(+) = 5-methyluridine(54) in tRNA + (6S)-5,6,7,8-tetrahydrofolate + NADP(+)</text>
        <dbReference type="Rhea" id="RHEA:62372"/>
        <dbReference type="Rhea" id="RHEA-COMP:10167"/>
        <dbReference type="Rhea" id="RHEA-COMP:10193"/>
        <dbReference type="ChEBI" id="CHEBI:15378"/>
        <dbReference type="ChEBI" id="CHEBI:15636"/>
        <dbReference type="ChEBI" id="CHEBI:57453"/>
        <dbReference type="ChEBI" id="CHEBI:57783"/>
        <dbReference type="ChEBI" id="CHEBI:58349"/>
        <dbReference type="ChEBI" id="CHEBI:65315"/>
        <dbReference type="ChEBI" id="CHEBI:74447"/>
        <dbReference type="EC" id="2.1.1.74"/>
    </reaction>
</comment>
<comment type="cofactor">
    <cofactor evidence="1">
        <name>FAD</name>
        <dbReference type="ChEBI" id="CHEBI:57692"/>
    </cofactor>
</comment>
<comment type="subcellular location">
    <subcellularLocation>
        <location evidence="1">Cytoplasm</location>
    </subcellularLocation>
</comment>
<comment type="similarity">
    <text evidence="1">Belongs to the MnmG family. TrmFO subfamily.</text>
</comment>
<protein>
    <recommendedName>
        <fullName evidence="1">Methylenetetrahydrofolate--tRNA-(uracil-5-)-methyltransferase TrmFO</fullName>
        <ecNumber evidence="1">2.1.1.74</ecNumber>
    </recommendedName>
    <alternativeName>
        <fullName evidence="1">Folate-dependent tRNA (uracil-5-)-methyltransferase</fullName>
    </alternativeName>
    <alternativeName>
        <fullName evidence="1">Folate-dependent tRNA(M-5-U54)-methyltransferase</fullName>
    </alternativeName>
</protein>
<organism>
    <name type="scientific">Dictyoglomus thermophilum (strain ATCC 35947 / DSM 3960 / H-6-12)</name>
    <dbReference type="NCBI Taxonomy" id="309799"/>
    <lineage>
        <taxon>Bacteria</taxon>
        <taxon>Pseudomonadati</taxon>
        <taxon>Dictyoglomota</taxon>
        <taxon>Dictyoglomia</taxon>
        <taxon>Dictyoglomales</taxon>
        <taxon>Dictyoglomaceae</taxon>
        <taxon>Dictyoglomus</taxon>
    </lineage>
</organism>
<accession>B5YFC6</accession>
<feature type="chain" id="PRO_1000149470" description="Methylenetetrahydrofolate--tRNA-(uracil-5-)-methyltransferase TrmFO">
    <location>
        <begin position="1"/>
        <end position="439"/>
    </location>
</feature>
<feature type="binding site" evidence="1">
    <location>
        <begin position="8"/>
        <end position="13"/>
    </location>
    <ligand>
        <name>FAD</name>
        <dbReference type="ChEBI" id="CHEBI:57692"/>
    </ligand>
</feature>
<dbReference type="EC" id="2.1.1.74" evidence="1"/>
<dbReference type="EMBL" id="CP001146">
    <property type="protein sequence ID" value="ACI18814.1"/>
    <property type="molecule type" value="Genomic_DNA"/>
</dbReference>
<dbReference type="RefSeq" id="WP_012547446.1">
    <property type="nucleotide sequence ID" value="NC_011297.1"/>
</dbReference>
<dbReference type="SMR" id="B5YFC6"/>
<dbReference type="STRING" id="309799.DICTH_1415"/>
<dbReference type="PaxDb" id="309799-DICTH_1415"/>
<dbReference type="KEGG" id="dth:DICTH_1415"/>
<dbReference type="eggNOG" id="COG1206">
    <property type="taxonomic scope" value="Bacteria"/>
</dbReference>
<dbReference type="HOGENOM" id="CLU_033057_1_0_0"/>
<dbReference type="OrthoDB" id="9803114at2"/>
<dbReference type="Proteomes" id="UP000001733">
    <property type="component" value="Chromosome"/>
</dbReference>
<dbReference type="GO" id="GO:0005829">
    <property type="term" value="C:cytosol"/>
    <property type="evidence" value="ECO:0007669"/>
    <property type="project" value="TreeGrafter"/>
</dbReference>
<dbReference type="GO" id="GO:0050660">
    <property type="term" value="F:flavin adenine dinucleotide binding"/>
    <property type="evidence" value="ECO:0007669"/>
    <property type="project" value="UniProtKB-UniRule"/>
</dbReference>
<dbReference type="GO" id="GO:0047151">
    <property type="term" value="F:tRNA (uracil(54)-C5)-methyltransferase activity, 5,10-methylenetetrahydrofolate-dependent"/>
    <property type="evidence" value="ECO:0007669"/>
    <property type="project" value="UniProtKB-UniRule"/>
</dbReference>
<dbReference type="GO" id="GO:0030488">
    <property type="term" value="P:tRNA methylation"/>
    <property type="evidence" value="ECO:0007669"/>
    <property type="project" value="TreeGrafter"/>
</dbReference>
<dbReference type="GO" id="GO:0002098">
    <property type="term" value="P:tRNA wobble uridine modification"/>
    <property type="evidence" value="ECO:0007669"/>
    <property type="project" value="TreeGrafter"/>
</dbReference>
<dbReference type="FunFam" id="3.50.50.60:FF:000035">
    <property type="entry name" value="Methylenetetrahydrofolate--tRNA-(uracil-5-)-methyltransferase TrmFO"/>
    <property type="match status" value="1"/>
</dbReference>
<dbReference type="Gene3D" id="3.50.50.60">
    <property type="entry name" value="FAD/NAD(P)-binding domain"/>
    <property type="match status" value="2"/>
</dbReference>
<dbReference type="HAMAP" id="MF_01037">
    <property type="entry name" value="TrmFO"/>
    <property type="match status" value="1"/>
</dbReference>
<dbReference type="InterPro" id="IPR036188">
    <property type="entry name" value="FAD/NAD-bd_sf"/>
</dbReference>
<dbReference type="InterPro" id="IPR002218">
    <property type="entry name" value="MnmG-rel"/>
</dbReference>
<dbReference type="InterPro" id="IPR020595">
    <property type="entry name" value="MnmG-rel_CS"/>
</dbReference>
<dbReference type="InterPro" id="IPR040131">
    <property type="entry name" value="MnmG_N"/>
</dbReference>
<dbReference type="InterPro" id="IPR004417">
    <property type="entry name" value="TrmFO"/>
</dbReference>
<dbReference type="NCBIfam" id="TIGR00137">
    <property type="entry name" value="gid_trmFO"/>
    <property type="match status" value="1"/>
</dbReference>
<dbReference type="NCBIfam" id="NF003739">
    <property type="entry name" value="PRK05335.1"/>
    <property type="match status" value="1"/>
</dbReference>
<dbReference type="PANTHER" id="PTHR11806">
    <property type="entry name" value="GLUCOSE INHIBITED DIVISION PROTEIN A"/>
    <property type="match status" value="1"/>
</dbReference>
<dbReference type="PANTHER" id="PTHR11806:SF2">
    <property type="entry name" value="METHYLENETETRAHYDROFOLATE--TRNA-(URACIL-5-)-METHYLTRANSFERASE TRMFO"/>
    <property type="match status" value="1"/>
</dbReference>
<dbReference type="Pfam" id="PF01134">
    <property type="entry name" value="GIDA"/>
    <property type="match status" value="1"/>
</dbReference>
<dbReference type="SUPFAM" id="SSF51905">
    <property type="entry name" value="FAD/NAD(P)-binding domain"/>
    <property type="match status" value="1"/>
</dbReference>
<dbReference type="PROSITE" id="PS01281">
    <property type="entry name" value="GIDA_2"/>
    <property type="match status" value="1"/>
</dbReference>
<gene>
    <name evidence="1" type="primary">trmFO</name>
    <name type="ordered locus">DICTH_1415</name>
</gene>
<reference key="1">
    <citation type="journal article" date="2014" name="Genome Announc.">
        <title>Complete Genome Sequence of the Extreme Thermophile Dictyoglomus thermophilum H-6-12.</title>
        <authorList>
            <person name="Coil D.A."/>
            <person name="Badger J.H."/>
            <person name="Forberger H.C."/>
            <person name="Riggs F."/>
            <person name="Madupu R."/>
            <person name="Fedorova N."/>
            <person name="Ward N."/>
            <person name="Robb F.T."/>
            <person name="Eisen J.A."/>
        </authorList>
    </citation>
    <scope>NUCLEOTIDE SEQUENCE [LARGE SCALE GENOMIC DNA]</scope>
    <source>
        <strain>ATCC 35947 / DSM 3960 / H-6-12</strain>
    </source>
</reference>
<keyword id="KW-0963">Cytoplasm</keyword>
<keyword id="KW-0274">FAD</keyword>
<keyword id="KW-0285">Flavoprotein</keyword>
<keyword id="KW-0489">Methyltransferase</keyword>
<keyword id="KW-0520">NAD</keyword>
<keyword id="KW-0521">NADP</keyword>
<keyword id="KW-0808">Transferase</keyword>
<keyword id="KW-0819">tRNA processing</keyword>
<proteinExistence type="inferred from homology"/>
<evidence type="ECO:0000255" key="1">
    <source>
        <dbReference type="HAMAP-Rule" id="MF_01037"/>
    </source>
</evidence>